<dbReference type="EMBL" id="CP000031">
    <property type="protein sequence ID" value="AAV93614.1"/>
    <property type="status" value="ALT_INIT"/>
    <property type="molecule type" value="Genomic_DNA"/>
</dbReference>
<dbReference type="RefSeq" id="WP_044028928.1">
    <property type="nucleotide sequence ID" value="NC_003911.12"/>
</dbReference>
<dbReference type="SMR" id="Q5LX84"/>
<dbReference type="STRING" id="246200.SPO0296"/>
<dbReference type="PaxDb" id="246200-SPO0296"/>
<dbReference type="KEGG" id="sil:SPO0296"/>
<dbReference type="eggNOG" id="COG1678">
    <property type="taxonomic scope" value="Bacteria"/>
</dbReference>
<dbReference type="HOGENOM" id="CLU_057596_1_0_5"/>
<dbReference type="OrthoDB" id="9807486at2"/>
<dbReference type="Proteomes" id="UP000001023">
    <property type="component" value="Chromosome"/>
</dbReference>
<dbReference type="GO" id="GO:0005829">
    <property type="term" value="C:cytosol"/>
    <property type="evidence" value="ECO:0007669"/>
    <property type="project" value="TreeGrafter"/>
</dbReference>
<dbReference type="Gene3D" id="3.40.1740.10">
    <property type="entry name" value="VC0467-like"/>
    <property type="match status" value="1"/>
</dbReference>
<dbReference type="HAMAP" id="MF_00758">
    <property type="entry name" value="UPF0301"/>
    <property type="match status" value="1"/>
</dbReference>
<dbReference type="InterPro" id="IPR003774">
    <property type="entry name" value="AlgH-like"/>
</dbReference>
<dbReference type="NCBIfam" id="NF001266">
    <property type="entry name" value="PRK00228.1-1"/>
    <property type="match status" value="1"/>
</dbReference>
<dbReference type="NCBIfam" id="NF001268">
    <property type="entry name" value="PRK00228.1-4"/>
    <property type="match status" value="1"/>
</dbReference>
<dbReference type="PANTHER" id="PTHR30327">
    <property type="entry name" value="UNCHARACTERIZED PROTEIN YQGE"/>
    <property type="match status" value="1"/>
</dbReference>
<dbReference type="PANTHER" id="PTHR30327:SF1">
    <property type="entry name" value="UPF0301 PROTEIN YQGE"/>
    <property type="match status" value="1"/>
</dbReference>
<dbReference type="Pfam" id="PF02622">
    <property type="entry name" value="DUF179"/>
    <property type="match status" value="1"/>
</dbReference>
<dbReference type="SUPFAM" id="SSF143456">
    <property type="entry name" value="VC0467-like"/>
    <property type="match status" value="1"/>
</dbReference>
<reference key="1">
    <citation type="journal article" date="2004" name="Nature">
        <title>Genome sequence of Silicibacter pomeroyi reveals adaptations to the marine environment.</title>
        <authorList>
            <person name="Moran M.A."/>
            <person name="Buchan A."/>
            <person name="Gonzalez J.M."/>
            <person name="Heidelberg J.F."/>
            <person name="Whitman W.B."/>
            <person name="Kiene R.P."/>
            <person name="Henriksen J.R."/>
            <person name="King G.M."/>
            <person name="Belas R."/>
            <person name="Fuqua C."/>
            <person name="Brinkac L.M."/>
            <person name="Lewis M."/>
            <person name="Johri S."/>
            <person name="Weaver B."/>
            <person name="Pai G."/>
            <person name="Eisen J.A."/>
            <person name="Rahe E."/>
            <person name="Sheldon W.M."/>
            <person name="Ye W."/>
            <person name="Miller T.R."/>
            <person name="Carlton J."/>
            <person name="Rasko D.A."/>
            <person name="Paulsen I.T."/>
            <person name="Ren Q."/>
            <person name="Daugherty S.C."/>
            <person name="DeBoy R.T."/>
            <person name="Dodson R.J."/>
            <person name="Durkin A.S."/>
            <person name="Madupu R."/>
            <person name="Nelson W.C."/>
            <person name="Sullivan S.A."/>
            <person name="Rosovitz M.J."/>
            <person name="Haft D.H."/>
            <person name="Selengut J."/>
            <person name="Ward N."/>
        </authorList>
    </citation>
    <scope>NUCLEOTIDE SEQUENCE [LARGE SCALE GENOMIC DNA]</scope>
    <source>
        <strain>ATCC 700808 / DSM 15171 / DSS-3</strain>
    </source>
</reference>
<reference key="2">
    <citation type="journal article" date="2014" name="Stand. Genomic Sci.">
        <title>An updated genome annotation for the model marine bacterium Ruegeria pomeroyi DSS-3.</title>
        <authorList>
            <person name="Rivers A.R."/>
            <person name="Smith C.B."/>
            <person name="Moran M.A."/>
        </authorList>
    </citation>
    <scope>GENOME REANNOTATION</scope>
    <source>
        <strain>ATCC 700808 / DSM 15171 / DSS-3</strain>
    </source>
</reference>
<sequence>MDLTGKLLIAMPGMGDPRFERSVIFLCSHGEDGAMGLIVNKPADLNVSTLLEQLEIPSSSAAAARAPVRLGGPVEMARGFVLHSPDYAGKLQSLKVSDGFVMTATLDILEDIARDNGPARAALMLGYSGWGPGQLEAEIGDNGWLTADADPDIVFGSRDDGKWEAALKLLGIDALLLSASAGHA</sequence>
<proteinExistence type="inferred from homology"/>
<name>Y296_RUEPO</name>
<evidence type="ECO:0000255" key="1">
    <source>
        <dbReference type="HAMAP-Rule" id="MF_00758"/>
    </source>
</evidence>
<evidence type="ECO:0000305" key="2"/>
<protein>
    <recommendedName>
        <fullName evidence="1">UPF0301 protein SPO0296</fullName>
    </recommendedName>
</protein>
<organism>
    <name type="scientific">Ruegeria pomeroyi (strain ATCC 700808 / DSM 15171 / DSS-3)</name>
    <name type="common">Silicibacter pomeroyi</name>
    <dbReference type="NCBI Taxonomy" id="246200"/>
    <lineage>
        <taxon>Bacteria</taxon>
        <taxon>Pseudomonadati</taxon>
        <taxon>Pseudomonadota</taxon>
        <taxon>Alphaproteobacteria</taxon>
        <taxon>Rhodobacterales</taxon>
        <taxon>Roseobacteraceae</taxon>
        <taxon>Ruegeria</taxon>
    </lineage>
</organism>
<comment type="similarity">
    <text evidence="1">Belongs to the UPF0301 (AlgH) family.</text>
</comment>
<comment type="sequence caution" evidence="2">
    <conflict type="erroneous initiation">
        <sequence resource="EMBL-CDS" id="AAV93614"/>
    </conflict>
</comment>
<feature type="chain" id="PRO_0000258884" description="UPF0301 protein SPO0296">
    <location>
        <begin position="1"/>
        <end position="184"/>
    </location>
</feature>
<keyword id="KW-1185">Reference proteome</keyword>
<gene>
    <name type="ordered locus">SPO0296</name>
</gene>
<accession>Q5LX84</accession>